<sequence>MVNTIGFDREKYIEMQSQHIRERREALGGKLYLEMGGKLFDDMHASRVLPGFTPDNKIAMLDRIKDEVEILVCINAKDLERHKIRADLGISYEEDVLRLVDVFRDRGFLVEHVVLTQLENDNRLALAFIERLQRLGIKVSRHRVIPGYPTDMDRIVSDEGFGLNEYAETTRDLVVVTAPGPGSGKLATCLSQVYHEHKRGVAAGYAKFETFPIWNLPLEHPVNLAYEAATVDLNDANVIDHFHLAAYGEQTVNYNRDVEAFPLLKTLLERLMGESPYQSPTDMGVNMAGNCISDDAACRHASEQEIIRRYFKALVEEARTGKDSTQSDRAAVVMAKAGIKASQRVVVEPARQVEERTSLPGCAIELVDGSIITGATSDLLGCSSSMLLNALKHLAGIDDAIHLLSPESIEPIQTLKTVHLGSSNPRLHTDEVLIALSVSAATDSNAQKALDQLKNLRGCDVHTTTILGSVDEGIFRNLGVLVTSDPKFQKNKLYQKR</sequence>
<keyword id="KW-0002">3D-structure</keyword>
<keyword id="KW-1185">Reference proteome</keyword>
<dbReference type="EMBL" id="BX248361">
    <property type="protein sequence ID" value="CAE50868.1"/>
    <property type="molecule type" value="Genomic_DNA"/>
</dbReference>
<dbReference type="RefSeq" id="WP_010935779.1">
    <property type="nucleotide sequence ID" value="NC_002935.2"/>
</dbReference>
<dbReference type="PDB" id="3BH1">
    <property type="method" value="X-ray"/>
    <property type="resolution" value="2.51 A"/>
    <property type="chains" value="A/B/C/D=2-497"/>
</dbReference>
<dbReference type="PDBsum" id="3BH1"/>
<dbReference type="SMR" id="Q6NEC9"/>
<dbReference type="STRING" id="257309.DIP2346"/>
<dbReference type="KEGG" id="cdi:DIP2346"/>
<dbReference type="HOGENOM" id="CLU_046981_0_0_11"/>
<dbReference type="EvolutionaryTrace" id="Q6NEC9"/>
<dbReference type="Proteomes" id="UP000002198">
    <property type="component" value="Chromosome"/>
</dbReference>
<dbReference type="Gene3D" id="1.20.1570.10">
    <property type="entry name" value="dip2346 domain like"/>
    <property type="match status" value="1"/>
</dbReference>
<dbReference type="Gene3D" id="3.10.630.10">
    <property type="entry name" value="dip2346 domain like"/>
    <property type="match status" value="1"/>
</dbReference>
<dbReference type="Gene3D" id="3.40.140.40">
    <property type="entry name" value="Domain of unknown function (DUF1846), C-terminal subdomain"/>
    <property type="match status" value="1"/>
</dbReference>
<dbReference type="HAMAP" id="MF_01567">
    <property type="entry name" value="UPF0371"/>
    <property type="match status" value="1"/>
</dbReference>
<dbReference type="InterPro" id="IPR014999">
    <property type="entry name" value="DUF1846"/>
</dbReference>
<dbReference type="InterPro" id="IPR048441">
    <property type="entry name" value="DUF1846_C"/>
</dbReference>
<dbReference type="InterPro" id="IPR048496">
    <property type="entry name" value="DUF1846_N"/>
</dbReference>
<dbReference type="NCBIfam" id="NF010184">
    <property type="entry name" value="PRK13663.1"/>
    <property type="match status" value="1"/>
</dbReference>
<dbReference type="Pfam" id="PF08903">
    <property type="entry name" value="DUF1846"/>
    <property type="match status" value="1"/>
</dbReference>
<dbReference type="Pfam" id="PF20921">
    <property type="entry name" value="DUF1846_C"/>
    <property type="match status" value="1"/>
</dbReference>
<dbReference type="PIRSF" id="PIRSF033132">
    <property type="entry name" value="DUF1846"/>
    <property type="match status" value="1"/>
</dbReference>
<gene>
    <name type="ordered locus">DIP2346</name>
</gene>
<protein>
    <recommendedName>
        <fullName evidence="1">UPF0371 protein DIP2346</fullName>
    </recommendedName>
</protein>
<organism>
    <name type="scientific">Corynebacterium diphtheriae (strain ATCC 700971 / NCTC 13129 / Biotype gravis)</name>
    <dbReference type="NCBI Taxonomy" id="257309"/>
    <lineage>
        <taxon>Bacteria</taxon>
        <taxon>Bacillati</taxon>
        <taxon>Actinomycetota</taxon>
        <taxon>Actinomycetes</taxon>
        <taxon>Mycobacteriales</taxon>
        <taxon>Corynebacteriaceae</taxon>
        <taxon>Corynebacterium</taxon>
    </lineage>
</organism>
<accession>Q6NEC9</accession>
<proteinExistence type="evidence at protein level"/>
<comment type="similarity">
    <text evidence="1">Belongs to the UPF0371 family.</text>
</comment>
<reference key="1">
    <citation type="journal article" date="2003" name="Nucleic Acids Res.">
        <title>The complete genome sequence and analysis of Corynebacterium diphtheriae NCTC13129.</title>
        <authorList>
            <person name="Cerdeno-Tarraga A.-M."/>
            <person name="Efstratiou A."/>
            <person name="Dover L.G."/>
            <person name="Holden M.T.G."/>
            <person name="Pallen M.J."/>
            <person name="Bentley S.D."/>
            <person name="Besra G.S."/>
            <person name="Churcher C.M."/>
            <person name="James K.D."/>
            <person name="De Zoysa A."/>
            <person name="Chillingworth T."/>
            <person name="Cronin A."/>
            <person name="Dowd L."/>
            <person name="Feltwell T."/>
            <person name="Hamlin N."/>
            <person name="Holroyd S."/>
            <person name="Jagels K."/>
            <person name="Moule S."/>
            <person name="Quail M.A."/>
            <person name="Rabbinowitsch E."/>
            <person name="Rutherford K.M."/>
            <person name="Thomson N.R."/>
            <person name="Unwin L."/>
            <person name="Whitehead S."/>
            <person name="Barrell B.G."/>
            <person name="Parkhill J."/>
        </authorList>
    </citation>
    <scope>NUCLEOTIDE SEQUENCE [LARGE SCALE GENOMIC DNA]</scope>
    <source>
        <strain>ATCC 700971 / NCTC 13129 / Biotype gravis</strain>
    </source>
</reference>
<evidence type="ECO:0000255" key="1">
    <source>
        <dbReference type="HAMAP-Rule" id="MF_01567"/>
    </source>
</evidence>
<evidence type="ECO:0007829" key="2">
    <source>
        <dbReference type="PDB" id="3BH1"/>
    </source>
</evidence>
<name>Y2346_CORDI</name>
<feature type="chain" id="PRO_0000245616" description="UPF0371 protein DIP2346">
    <location>
        <begin position="1"/>
        <end position="497"/>
    </location>
</feature>
<feature type="helix" evidence="2">
    <location>
        <begin position="9"/>
        <end position="26"/>
    </location>
</feature>
<feature type="strand" evidence="2">
    <location>
        <begin position="29"/>
        <end position="35"/>
    </location>
</feature>
<feature type="helix" evidence="2">
    <location>
        <begin position="43"/>
        <end position="48"/>
    </location>
</feature>
<feature type="helix" evidence="2">
    <location>
        <begin position="56"/>
        <end position="62"/>
    </location>
</feature>
<feature type="helix" evidence="2">
    <location>
        <begin position="63"/>
        <end position="67"/>
    </location>
</feature>
<feature type="strand" evidence="2">
    <location>
        <begin position="68"/>
        <end position="75"/>
    </location>
</feature>
<feature type="helix" evidence="2">
    <location>
        <begin position="76"/>
        <end position="79"/>
    </location>
</feature>
<feature type="turn" evidence="2">
    <location>
        <begin position="80"/>
        <end position="82"/>
    </location>
</feature>
<feature type="turn" evidence="2">
    <location>
        <begin position="86"/>
        <end position="88"/>
    </location>
</feature>
<feature type="strand" evidence="2">
    <location>
        <begin position="89"/>
        <end position="91"/>
    </location>
</feature>
<feature type="helix" evidence="2">
    <location>
        <begin position="92"/>
        <end position="105"/>
    </location>
</feature>
<feature type="strand" evidence="2">
    <location>
        <begin position="109"/>
        <end position="117"/>
    </location>
</feature>
<feature type="helix" evidence="2">
    <location>
        <begin position="123"/>
        <end position="133"/>
    </location>
</feature>
<feature type="turn" evidence="2">
    <location>
        <begin position="134"/>
        <end position="136"/>
    </location>
</feature>
<feature type="strand" evidence="2">
    <location>
        <begin position="138"/>
        <end position="141"/>
    </location>
</feature>
<feature type="turn" evidence="2">
    <location>
        <begin position="146"/>
        <end position="150"/>
    </location>
</feature>
<feature type="helix" evidence="2">
    <location>
        <begin position="152"/>
        <end position="155"/>
    </location>
</feature>
<feature type="turn" evidence="2">
    <location>
        <begin position="158"/>
        <end position="160"/>
    </location>
</feature>
<feature type="helix" evidence="2">
    <location>
        <begin position="161"/>
        <end position="163"/>
    </location>
</feature>
<feature type="strand" evidence="2">
    <location>
        <begin position="171"/>
        <end position="177"/>
    </location>
</feature>
<feature type="helix" evidence="2">
    <location>
        <begin position="185"/>
        <end position="198"/>
    </location>
</feature>
<feature type="strand" evidence="2">
    <location>
        <begin position="203"/>
        <end position="208"/>
    </location>
</feature>
<feature type="helix" evidence="2">
    <location>
        <begin position="221"/>
        <end position="228"/>
    </location>
</feature>
<feature type="helix" evidence="2">
    <location>
        <begin position="233"/>
        <end position="235"/>
    </location>
</feature>
<feature type="strand" evidence="2">
    <location>
        <begin position="236"/>
        <end position="239"/>
    </location>
</feature>
<feature type="helix" evidence="2">
    <location>
        <begin position="241"/>
        <end position="247"/>
    </location>
</feature>
<feature type="strand" evidence="2">
    <location>
        <begin position="252"/>
        <end position="254"/>
    </location>
</feature>
<feature type="helix" evidence="2">
    <location>
        <begin position="255"/>
        <end position="272"/>
    </location>
</feature>
<feature type="helix" evidence="2">
    <location>
        <begin position="280"/>
        <end position="283"/>
    </location>
</feature>
<feature type="helix" evidence="2">
    <location>
        <begin position="288"/>
        <end position="290"/>
    </location>
</feature>
<feature type="helix" evidence="2">
    <location>
        <begin position="295"/>
        <end position="320"/>
    </location>
</feature>
<feature type="helix" evidence="2">
    <location>
        <begin position="325"/>
        <end position="337"/>
    </location>
</feature>
<feature type="helix" evidence="2">
    <location>
        <begin position="341"/>
        <end position="343"/>
    </location>
</feature>
<feature type="helix" evidence="2">
    <location>
        <begin position="347"/>
        <end position="357"/>
    </location>
</feature>
<feature type="strand" evidence="2">
    <location>
        <begin position="361"/>
        <end position="365"/>
    </location>
</feature>
<feature type="strand" evidence="2">
    <location>
        <begin position="371"/>
        <end position="375"/>
    </location>
</feature>
<feature type="strand" evidence="2">
    <location>
        <begin position="378"/>
        <end position="380"/>
    </location>
</feature>
<feature type="helix" evidence="2">
    <location>
        <begin position="382"/>
        <end position="395"/>
    </location>
</feature>
<feature type="helix" evidence="2">
    <location>
        <begin position="406"/>
        <end position="418"/>
    </location>
</feature>
<feature type="helix" evidence="2">
    <location>
        <begin position="429"/>
        <end position="439"/>
    </location>
</feature>
<feature type="turn" evidence="2">
    <location>
        <begin position="440"/>
        <end position="442"/>
    </location>
</feature>
<feature type="helix" evidence="2">
    <location>
        <begin position="444"/>
        <end position="450"/>
    </location>
</feature>
<feature type="helix" evidence="2">
    <location>
        <begin position="451"/>
        <end position="456"/>
    </location>
</feature>
<feature type="strand" evidence="2">
    <location>
        <begin position="460"/>
        <end position="465"/>
    </location>
</feature>
<feature type="helix" evidence="2">
    <location>
        <begin position="469"/>
        <end position="477"/>
    </location>
</feature>
<feature type="strand" evidence="2">
    <location>
        <begin position="481"/>
        <end position="484"/>
    </location>
</feature>